<sequence>MFGCLVAGRLVQTDAQQVASDKFVFNLPDYEHVNHVVVFLLGTVPFPEGLGGAVYLCVPGGAAGQVWQLLGFITNEKPSAIFRISGLKAGEGSSHPFGMMDAPAAPSMAQVGVSVEGLHLLAQQTPVSSSAVSTLDSFTQFTQKMLDSLFNFTSSFALSQSQMSPNPSEMFIPASSIRRWYENFQRRLMQNPNFWKT</sequence>
<gene>
    <name type="primary">hikeshi</name>
    <name type="ORF">zgc:110091</name>
</gene>
<keyword id="KW-0963">Cytoplasm</keyword>
<keyword id="KW-0539">Nucleus</keyword>
<keyword id="KW-0653">Protein transport</keyword>
<keyword id="KW-1185">Reference proteome</keyword>
<keyword id="KW-0813">Transport</keyword>
<comment type="function">
    <text evidence="1">Acts as a specific nuclear import carrier for hsp70 proteins following heat-shock stress: acts by mediating the nucleoporin-dependent translocation of ATP-bound hsp70 proteins into the nucleus. hsp70 proteins import is required to protect cells from heat shock damages (By similarity).</text>
</comment>
<comment type="subcellular location">
    <subcellularLocation>
        <location evidence="1">Cytoplasm</location>
        <location evidence="1">Cytosol</location>
    </subcellularLocation>
    <subcellularLocation>
        <location evidence="1">Nucleus</location>
    </subcellularLocation>
</comment>
<comment type="similarity">
    <text evidence="2">Belongs to the OPI10 family.</text>
</comment>
<organism>
    <name type="scientific">Danio rerio</name>
    <name type="common">Zebrafish</name>
    <name type="synonym">Brachydanio rerio</name>
    <dbReference type="NCBI Taxonomy" id="7955"/>
    <lineage>
        <taxon>Eukaryota</taxon>
        <taxon>Metazoa</taxon>
        <taxon>Chordata</taxon>
        <taxon>Craniata</taxon>
        <taxon>Vertebrata</taxon>
        <taxon>Euteleostomi</taxon>
        <taxon>Actinopterygii</taxon>
        <taxon>Neopterygii</taxon>
        <taxon>Teleostei</taxon>
        <taxon>Ostariophysi</taxon>
        <taxon>Cypriniformes</taxon>
        <taxon>Danionidae</taxon>
        <taxon>Danioninae</taxon>
        <taxon>Danio</taxon>
    </lineage>
</organism>
<accession>Q568T4</accession>
<accession>F1QUB6</accession>
<reference key="1">
    <citation type="journal article" date="2013" name="Nature">
        <title>The zebrafish reference genome sequence and its relationship to the human genome.</title>
        <authorList>
            <person name="Howe K."/>
            <person name="Clark M.D."/>
            <person name="Torroja C.F."/>
            <person name="Torrance J."/>
            <person name="Berthelot C."/>
            <person name="Muffato M."/>
            <person name="Collins J.E."/>
            <person name="Humphray S."/>
            <person name="McLaren K."/>
            <person name="Matthews L."/>
            <person name="McLaren S."/>
            <person name="Sealy I."/>
            <person name="Caccamo M."/>
            <person name="Churcher C."/>
            <person name="Scott C."/>
            <person name="Barrett J.C."/>
            <person name="Koch R."/>
            <person name="Rauch G.J."/>
            <person name="White S."/>
            <person name="Chow W."/>
            <person name="Kilian B."/>
            <person name="Quintais L.T."/>
            <person name="Guerra-Assuncao J.A."/>
            <person name="Zhou Y."/>
            <person name="Gu Y."/>
            <person name="Yen J."/>
            <person name="Vogel J.H."/>
            <person name="Eyre T."/>
            <person name="Redmond S."/>
            <person name="Banerjee R."/>
            <person name="Chi J."/>
            <person name="Fu B."/>
            <person name="Langley E."/>
            <person name="Maguire S.F."/>
            <person name="Laird G.K."/>
            <person name="Lloyd D."/>
            <person name="Kenyon E."/>
            <person name="Donaldson S."/>
            <person name="Sehra H."/>
            <person name="Almeida-King J."/>
            <person name="Loveland J."/>
            <person name="Trevanion S."/>
            <person name="Jones M."/>
            <person name="Quail M."/>
            <person name="Willey D."/>
            <person name="Hunt A."/>
            <person name="Burton J."/>
            <person name="Sims S."/>
            <person name="McLay K."/>
            <person name="Plumb B."/>
            <person name="Davis J."/>
            <person name="Clee C."/>
            <person name="Oliver K."/>
            <person name="Clark R."/>
            <person name="Riddle C."/>
            <person name="Elliot D."/>
            <person name="Threadgold G."/>
            <person name="Harden G."/>
            <person name="Ware D."/>
            <person name="Begum S."/>
            <person name="Mortimore B."/>
            <person name="Kerry G."/>
            <person name="Heath P."/>
            <person name="Phillimore B."/>
            <person name="Tracey A."/>
            <person name="Corby N."/>
            <person name="Dunn M."/>
            <person name="Johnson C."/>
            <person name="Wood J."/>
            <person name="Clark S."/>
            <person name="Pelan S."/>
            <person name="Griffiths G."/>
            <person name="Smith M."/>
            <person name="Glithero R."/>
            <person name="Howden P."/>
            <person name="Barker N."/>
            <person name="Lloyd C."/>
            <person name="Stevens C."/>
            <person name="Harley J."/>
            <person name="Holt K."/>
            <person name="Panagiotidis G."/>
            <person name="Lovell J."/>
            <person name="Beasley H."/>
            <person name="Henderson C."/>
            <person name="Gordon D."/>
            <person name="Auger K."/>
            <person name="Wright D."/>
            <person name="Collins J."/>
            <person name="Raisen C."/>
            <person name="Dyer L."/>
            <person name="Leung K."/>
            <person name="Robertson L."/>
            <person name="Ambridge K."/>
            <person name="Leongamornlert D."/>
            <person name="McGuire S."/>
            <person name="Gilderthorp R."/>
            <person name="Griffiths C."/>
            <person name="Manthravadi D."/>
            <person name="Nichol S."/>
            <person name="Barker G."/>
            <person name="Whitehead S."/>
            <person name="Kay M."/>
            <person name="Brown J."/>
            <person name="Murnane C."/>
            <person name="Gray E."/>
            <person name="Humphries M."/>
            <person name="Sycamore N."/>
            <person name="Barker D."/>
            <person name="Saunders D."/>
            <person name="Wallis J."/>
            <person name="Babbage A."/>
            <person name="Hammond S."/>
            <person name="Mashreghi-Mohammadi M."/>
            <person name="Barr L."/>
            <person name="Martin S."/>
            <person name="Wray P."/>
            <person name="Ellington A."/>
            <person name="Matthews N."/>
            <person name="Ellwood M."/>
            <person name="Woodmansey R."/>
            <person name="Clark G."/>
            <person name="Cooper J."/>
            <person name="Tromans A."/>
            <person name="Grafham D."/>
            <person name="Skuce C."/>
            <person name="Pandian R."/>
            <person name="Andrews R."/>
            <person name="Harrison E."/>
            <person name="Kimberley A."/>
            <person name="Garnett J."/>
            <person name="Fosker N."/>
            <person name="Hall R."/>
            <person name="Garner P."/>
            <person name="Kelly D."/>
            <person name="Bird C."/>
            <person name="Palmer S."/>
            <person name="Gehring I."/>
            <person name="Berger A."/>
            <person name="Dooley C.M."/>
            <person name="Ersan-Urun Z."/>
            <person name="Eser C."/>
            <person name="Geiger H."/>
            <person name="Geisler M."/>
            <person name="Karotki L."/>
            <person name="Kirn A."/>
            <person name="Konantz J."/>
            <person name="Konantz M."/>
            <person name="Oberlander M."/>
            <person name="Rudolph-Geiger S."/>
            <person name="Teucke M."/>
            <person name="Lanz C."/>
            <person name="Raddatz G."/>
            <person name="Osoegawa K."/>
            <person name="Zhu B."/>
            <person name="Rapp A."/>
            <person name="Widaa S."/>
            <person name="Langford C."/>
            <person name="Yang F."/>
            <person name="Schuster S.C."/>
            <person name="Carter N.P."/>
            <person name="Harrow J."/>
            <person name="Ning Z."/>
            <person name="Herrero J."/>
            <person name="Searle S.M."/>
            <person name="Enright A."/>
            <person name="Geisler R."/>
            <person name="Plasterk R.H."/>
            <person name="Lee C."/>
            <person name="Westerfield M."/>
            <person name="de Jong P.J."/>
            <person name="Zon L.I."/>
            <person name="Postlethwait J.H."/>
            <person name="Nusslein-Volhard C."/>
            <person name="Hubbard T.J."/>
            <person name="Roest Crollius H."/>
            <person name="Rogers J."/>
            <person name="Stemple D.L."/>
        </authorList>
    </citation>
    <scope>NUCLEOTIDE SEQUENCE [LARGE SCALE GENOMIC DNA]</scope>
    <source>
        <strain>Tuebingen</strain>
    </source>
</reference>
<reference key="2">
    <citation type="submission" date="2005-04" db="EMBL/GenBank/DDBJ databases">
        <authorList>
            <consortium name="NIH - Zebrafish Gene Collection (ZGC) project"/>
        </authorList>
    </citation>
    <scope>NUCLEOTIDE SEQUENCE [LARGE SCALE MRNA]</scope>
    <source>
        <tissue>Embryo</tissue>
    </source>
</reference>
<protein>
    <recommendedName>
        <fullName>Protein Hikeshi</fullName>
    </recommendedName>
</protein>
<proteinExistence type="evidence at transcript level"/>
<dbReference type="EMBL" id="CU651657">
    <property type="status" value="NOT_ANNOTATED_CDS"/>
    <property type="molecule type" value="Genomic_DNA"/>
</dbReference>
<dbReference type="EMBL" id="BC092729">
    <property type="protein sequence ID" value="AAH92729.1"/>
    <property type="molecule type" value="mRNA"/>
</dbReference>
<dbReference type="RefSeq" id="NP_001017577.1">
    <property type="nucleotide sequence ID" value="NM_001017577.1"/>
</dbReference>
<dbReference type="SMR" id="Q568T4"/>
<dbReference type="FunCoup" id="Q568T4">
    <property type="interactions" value="1751"/>
</dbReference>
<dbReference type="STRING" id="7955.ENSDARP00000131338"/>
<dbReference type="PaxDb" id="7955-ENSDARP00000059340"/>
<dbReference type="Ensembl" id="ENSDART00000169685">
    <property type="protein sequence ID" value="ENSDARP00000131338"/>
    <property type="gene ID" value="ENSDARG00000104071"/>
</dbReference>
<dbReference type="GeneID" id="550239"/>
<dbReference type="KEGG" id="dre:550239"/>
<dbReference type="AGR" id="ZFIN:ZDB-GENE-050417-34"/>
<dbReference type="CTD" id="51501"/>
<dbReference type="ZFIN" id="ZDB-GENE-050417-34">
    <property type="gene designation" value="hikeshi"/>
</dbReference>
<dbReference type="eggNOG" id="KOG4067">
    <property type="taxonomic scope" value="Eukaryota"/>
</dbReference>
<dbReference type="HOGENOM" id="CLU_084839_2_0_1"/>
<dbReference type="InParanoid" id="Q568T4"/>
<dbReference type="OMA" id="WWAKFER"/>
<dbReference type="OrthoDB" id="10248398at2759"/>
<dbReference type="PhylomeDB" id="Q568T4"/>
<dbReference type="TreeFam" id="TF313222"/>
<dbReference type="Reactome" id="R-DRE-3371453">
    <property type="pathway name" value="Regulation of HSF1-mediated heat shock response"/>
</dbReference>
<dbReference type="PRO" id="PR:Q568T4"/>
<dbReference type="Proteomes" id="UP000000437">
    <property type="component" value="Chromosome 1"/>
</dbReference>
<dbReference type="Bgee" id="ENSDARG00000104071">
    <property type="expression patterns" value="Expressed in muscle tissue and 30 other cell types or tissues"/>
</dbReference>
<dbReference type="GO" id="GO:0005829">
    <property type="term" value="C:cytosol"/>
    <property type="evidence" value="ECO:0000250"/>
    <property type="project" value="UniProtKB"/>
</dbReference>
<dbReference type="GO" id="GO:0005634">
    <property type="term" value="C:nucleus"/>
    <property type="evidence" value="ECO:0000250"/>
    <property type="project" value="UniProtKB"/>
</dbReference>
<dbReference type="GO" id="GO:0030544">
    <property type="term" value="F:Hsp70 protein binding"/>
    <property type="evidence" value="ECO:0000250"/>
    <property type="project" value="UniProtKB"/>
</dbReference>
<dbReference type="GO" id="GO:0061608">
    <property type="term" value="F:nuclear import signal receptor activity"/>
    <property type="evidence" value="ECO:0000318"/>
    <property type="project" value="GO_Central"/>
</dbReference>
<dbReference type="GO" id="GO:0034605">
    <property type="term" value="P:cellular response to heat"/>
    <property type="evidence" value="ECO:0000250"/>
    <property type="project" value="UniProtKB"/>
</dbReference>
<dbReference type="GO" id="GO:0006606">
    <property type="term" value="P:protein import into nucleus"/>
    <property type="evidence" value="ECO:0000250"/>
    <property type="project" value="UniProtKB"/>
</dbReference>
<dbReference type="GO" id="GO:0015031">
    <property type="term" value="P:protein transport"/>
    <property type="evidence" value="ECO:0000250"/>
    <property type="project" value="UniProtKB"/>
</dbReference>
<dbReference type="InterPro" id="IPR048364">
    <property type="entry name" value="Hikeshi-like_C"/>
</dbReference>
<dbReference type="InterPro" id="IPR008493">
    <property type="entry name" value="Hikeshi-like_N"/>
</dbReference>
<dbReference type="InterPro" id="IPR031318">
    <property type="entry name" value="OPI10"/>
</dbReference>
<dbReference type="PANTHER" id="PTHR12925">
    <property type="entry name" value="HIKESHI FAMILY MEMBER"/>
    <property type="match status" value="1"/>
</dbReference>
<dbReference type="PANTHER" id="PTHR12925:SF0">
    <property type="entry name" value="PROTEIN HIKESHI"/>
    <property type="match status" value="1"/>
</dbReference>
<dbReference type="Pfam" id="PF21057">
    <property type="entry name" value="Hikeshi-like_C"/>
    <property type="match status" value="1"/>
</dbReference>
<dbReference type="Pfam" id="PF05603">
    <property type="entry name" value="Hikeshi-like_N"/>
    <property type="match status" value="1"/>
</dbReference>
<evidence type="ECO:0000250" key="1"/>
<evidence type="ECO:0000305" key="2"/>
<feature type="chain" id="PRO_0000245266" description="Protein Hikeshi">
    <location>
        <begin position="1"/>
        <end position="197"/>
    </location>
</feature>
<feature type="sequence conflict" description="In Ref. 2; AAH92729." evidence="2" ref="2">
    <original>Q</original>
    <variation>R</variation>
    <location>
        <position position="162"/>
    </location>
</feature>
<name>HIKES_DANRE</name>